<dbReference type="PIR" id="S06564">
    <property type="entry name" value="S06564"/>
</dbReference>
<dbReference type="SMR" id="P18713"/>
<dbReference type="Proteomes" id="UP000186698">
    <property type="component" value="Unplaced"/>
</dbReference>
<dbReference type="GO" id="GO:0005634">
    <property type="term" value="C:nucleus"/>
    <property type="evidence" value="ECO:0007669"/>
    <property type="project" value="UniProtKB-SubCell"/>
</dbReference>
<dbReference type="GO" id="GO:0000981">
    <property type="term" value="F:DNA-binding transcription factor activity, RNA polymerase II-specific"/>
    <property type="evidence" value="ECO:0000318"/>
    <property type="project" value="GO_Central"/>
</dbReference>
<dbReference type="GO" id="GO:0000978">
    <property type="term" value="F:RNA polymerase II cis-regulatory region sequence-specific DNA binding"/>
    <property type="evidence" value="ECO:0000318"/>
    <property type="project" value="GO_Central"/>
</dbReference>
<dbReference type="GO" id="GO:0008270">
    <property type="term" value="F:zinc ion binding"/>
    <property type="evidence" value="ECO:0007669"/>
    <property type="project" value="UniProtKB-KW"/>
</dbReference>
<dbReference type="GO" id="GO:0006357">
    <property type="term" value="P:regulation of transcription by RNA polymerase II"/>
    <property type="evidence" value="ECO:0000318"/>
    <property type="project" value="GO_Central"/>
</dbReference>
<dbReference type="FunFam" id="3.30.160.60:FF:003089">
    <property type="match status" value="1"/>
</dbReference>
<dbReference type="FunFam" id="3.30.160.60:FF:001158">
    <property type="entry name" value="zinc finger protein 22"/>
    <property type="match status" value="2"/>
</dbReference>
<dbReference type="FunFam" id="3.30.160.60:FF:000812">
    <property type="entry name" value="zinc finger protein 23 isoform X2"/>
    <property type="match status" value="1"/>
</dbReference>
<dbReference type="FunFam" id="3.30.160.60:FF:001326">
    <property type="entry name" value="Zinc finger protein 432"/>
    <property type="match status" value="1"/>
</dbReference>
<dbReference type="FunFam" id="3.30.160.60:FF:002274">
    <property type="entry name" value="Zinc finger protein 432"/>
    <property type="match status" value="1"/>
</dbReference>
<dbReference type="FunFam" id="3.30.160.60:FF:000936">
    <property type="entry name" value="Zinc finger protein 577"/>
    <property type="match status" value="1"/>
</dbReference>
<dbReference type="Gene3D" id="3.30.160.60">
    <property type="entry name" value="Classic Zinc Finger"/>
    <property type="match status" value="7"/>
</dbReference>
<dbReference type="InterPro" id="IPR036236">
    <property type="entry name" value="Znf_C2H2_sf"/>
</dbReference>
<dbReference type="InterPro" id="IPR013087">
    <property type="entry name" value="Znf_C2H2_type"/>
</dbReference>
<dbReference type="PANTHER" id="PTHR23235">
    <property type="entry name" value="KRUEPPEL-LIKE TRANSCRIPTION FACTOR"/>
    <property type="match status" value="1"/>
</dbReference>
<dbReference type="PANTHER" id="PTHR23235:SF142">
    <property type="entry name" value="ZINC FINGER PROTEIN 384"/>
    <property type="match status" value="1"/>
</dbReference>
<dbReference type="Pfam" id="PF00096">
    <property type="entry name" value="zf-C2H2"/>
    <property type="match status" value="7"/>
</dbReference>
<dbReference type="SMART" id="SM00355">
    <property type="entry name" value="ZnF_C2H2"/>
    <property type="match status" value="7"/>
</dbReference>
<dbReference type="SUPFAM" id="SSF57667">
    <property type="entry name" value="beta-beta-alpha zinc fingers"/>
    <property type="match status" value="4"/>
</dbReference>
<dbReference type="PROSITE" id="PS00028">
    <property type="entry name" value="ZINC_FINGER_C2H2_1"/>
    <property type="match status" value="7"/>
</dbReference>
<dbReference type="PROSITE" id="PS50157">
    <property type="entry name" value="ZINC_FINGER_C2H2_2"/>
    <property type="match status" value="7"/>
</dbReference>
<comment type="function">
    <text>May be involved in transcriptional regulation.</text>
</comment>
<comment type="subcellular location">
    <subcellularLocation>
        <location evidence="2">Nucleus</location>
    </subcellularLocation>
</comment>
<comment type="similarity">
    <text evidence="2">Belongs to the krueppel C2H2-type zinc-finger protein family.</text>
</comment>
<evidence type="ECO:0000255" key="1">
    <source>
        <dbReference type="PROSITE-ProRule" id="PRU00042"/>
    </source>
</evidence>
<evidence type="ECO:0000305" key="2"/>
<reference key="1">
    <citation type="journal article" date="1989" name="J. Mol. Biol.">
        <title>Second-order repeats in Xenopus laevis finger proteins.</title>
        <authorList>
            <person name="Nietfeld W."/>
            <person name="El-Baradi T."/>
            <person name="Mentzel H."/>
            <person name="Pieler T."/>
            <person name="Koester M."/>
            <person name="Poeting A."/>
            <person name="Knoechel W."/>
        </authorList>
    </citation>
    <scope>NUCLEOTIDE SEQUENCE</scope>
</reference>
<feature type="chain" id="PRO_0000047787" description="Gastrula zinc finger protein XlCGF17.1">
    <location>
        <begin position="1" status="less than"/>
        <end position="197" status="greater than"/>
    </location>
</feature>
<feature type="zinc finger region" description="C2H2-type 1" evidence="1">
    <location>
        <begin position="6"/>
        <end position="28"/>
    </location>
</feature>
<feature type="zinc finger region" description="C2H2-type 2" evidence="1">
    <location>
        <begin position="34"/>
        <end position="56"/>
    </location>
</feature>
<feature type="zinc finger region" description="C2H2-type 3" evidence="1">
    <location>
        <begin position="62"/>
        <end position="84"/>
    </location>
</feature>
<feature type="zinc finger region" description="C2H2-type 4" evidence="1">
    <location>
        <begin position="90"/>
        <end position="112"/>
    </location>
</feature>
<feature type="zinc finger region" description="C2H2-type 5" evidence="1">
    <location>
        <begin position="118"/>
        <end position="140"/>
    </location>
</feature>
<feature type="zinc finger region" description="C2H2-type 6" evidence="1">
    <location>
        <begin position="146"/>
        <end position="169"/>
    </location>
</feature>
<feature type="zinc finger region" description="C2H2-type 7" evidence="1">
    <location>
        <begin position="175"/>
        <end position="197"/>
    </location>
</feature>
<feature type="non-terminal residue">
    <location>
        <position position="1"/>
    </location>
</feature>
<feature type="non-terminal residue">
    <location>
        <position position="197"/>
    </location>
</feature>
<sequence>TGEKSISCSECGKCFIKSSELTVHQMTHIGEKTYSCSECGKCFASLSHLRVHQKIHTGEKPFSCSECGKCFLNRGSLVRHHRTHTGEKPFFCSECGKRFAASSDLRVHRRTHTGEKPFSCSECEKRFLNPWSLVRHYRTHTGEKPFSCSECGKCFARSSDLTVHRRRSHTKEKPFSCSECGKCFTSSSELTVHLRTH</sequence>
<keyword id="KW-0238">DNA-binding</keyword>
<keyword id="KW-0479">Metal-binding</keyword>
<keyword id="KW-0539">Nucleus</keyword>
<keyword id="KW-1185">Reference proteome</keyword>
<keyword id="KW-0677">Repeat</keyword>
<keyword id="KW-0804">Transcription</keyword>
<keyword id="KW-0805">Transcription regulation</keyword>
<keyword id="KW-0862">Zinc</keyword>
<keyword id="KW-0863">Zinc-finger</keyword>
<accession>P18713</accession>
<name>ZG17_XENLA</name>
<organism>
    <name type="scientific">Xenopus laevis</name>
    <name type="common">African clawed frog</name>
    <dbReference type="NCBI Taxonomy" id="8355"/>
    <lineage>
        <taxon>Eukaryota</taxon>
        <taxon>Metazoa</taxon>
        <taxon>Chordata</taxon>
        <taxon>Craniata</taxon>
        <taxon>Vertebrata</taxon>
        <taxon>Euteleostomi</taxon>
        <taxon>Amphibia</taxon>
        <taxon>Batrachia</taxon>
        <taxon>Anura</taxon>
        <taxon>Pipoidea</taxon>
        <taxon>Pipidae</taxon>
        <taxon>Xenopodinae</taxon>
        <taxon>Xenopus</taxon>
        <taxon>Xenopus</taxon>
    </lineage>
</organism>
<protein>
    <recommendedName>
        <fullName>Gastrula zinc finger protein XlCGF17.1</fullName>
    </recommendedName>
</protein>
<proteinExistence type="inferred from homology"/>